<sequence>MPVVSLAELLESGVHFGHQTRRWNPKMSQYIYTARNGVHIIDLVQTAQLIEEAYEFVRGEADRGKRFLFIGTKRQAAAIIKQEALRSGSHFVNQRWLGGMLTNWETIRGRVERLKELEELENSGALDKRPKKEASVLRRELGKLEKYLGGIKTMRRLPDLVVVVDQRREYNAIQECQKLGIPIISLLDTNCDPDLVDVPIPANDDAIRSVKLILGKISDAIIEGRRGGQAAVEEYEEDYDNETEYEEEGDYSQYAAEFASGDDDN</sequence>
<organism>
    <name type="scientific">Microcystis aeruginosa (strain NIES-843 / IAM M-2473)</name>
    <dbReference type="NCBI Taxonomy" id="449447"/>
    <lineage>
        <taxon>Bacteria</taxon>
        <taxon>Bacillati</taxon>
        <taxon>Cyanobacteriota</taxon>
        <taxon>Cyanophyceae</taxon>
        <taxon>Oscillatoriophycideae</taxon>
        <taxon>Chroococcales</taxon>
        <taxon>Microcystaceae</taxon>
        <taxon>Microcystis</taxon>
    </lineage>
</organism>
<name>RS2_MICAN</name>
<comment type="similarity">
    <text evidence="1">Belongs to the universal ribosomal protein uS2 family.</text>
</comment>
<reference key="1">
    <citation type="journal article" date="2007" name="DNA Res.">
        <title>Complete genomic structure of the bloom-forming toxic cyanobacterium Microcystis aeruginosa NIES-843.</title>
        <authorList>
            <person name="Kaneko T."/>
            <person name="Nakajima N."/>
            <person name="Okamoto S."/>
            <person name="Suzuki I."/>
            <person name="Tanabe Y."/>
            <person name="Tamaoki M."/>
            <person name="Nakamura Y."/>
            <person name="Kasai F."/>
            <person name="Watanabe A."/>
            <person name="Kawashima K."/>
            <person name="Kishida Y."/>
            <person name="Ono A."/>
            <person name="Shimizu Y."/>
            <person name="Takahashi C."/>
            <person name="Minami C."/>
            <person name="Fujishiro T."/>
            <person name="Kohara M."/>
            <person name="Katoh M."/>
            <person name="Nakazaki N."/>
            <person name="Nakayama S."/>
            <person name="Yamada M."/>
            <person name="Tabata S."/>
            <person name="Watanabe M.M."/>
        </authorList>
    </citation>
    <scope>NUCLEOTIDE SEQUENCE [LARGE SCALE GENOMIC DNA]</scope>
    <source>
        <strain>NIES-843 / IAM M-247</strain>
    </source>
</reference>
<evidence type="ECO:0000255" key="1">
    <source>
        <dbReference type="HAMAP-Rule" id="MF_00291"/>
    </source>
</evidence>
<evidence type="ECO:0000305" key="2"/>
<dbReference type="EMBL" id="AP009552">
    <property type="protein sequence ID" value="BAG04315.1"/>
    <property type="molecule type" value="Genomic_DNA"/>
</dbReference>
<dbReference type="RefSeq" id="WP_004162676.1">
    <property type="nucleotide sequence ID" value="NC_010296.1"/>
</dbReference>
<dbReference type="SMR" id="B0JTL2"/>
<dbReference type="STRING" id="449447.MAE_44930"/>
<dbReference type="PaxDb" id="449447-MAE_44930"/>
<dbReference type="EnsemblBacteria" id="BAG04315">
    <property type="protein sequence ID" value="BAG04315"/>
    <property type="gene ID" value="MAE_44930"/>
</dbReference>
<dbReference type="GeneID" id="66707550"/>
<dbReference type="KEGG" id="mar:MAE_44930"/>
<dbReference type="eggNOG" id="COG0052">
    <property type="taxonomic scope" value="Bacteria"/>
</dbReference>
<dbReference type="HOGENOM" id="CLU_040318_1_2_3"/>
<dbReference type="BioCyc" id="MAER449447:MAE_RS19470-MONOMER"/>
<dbReference type="Proteomes" id="UP000001510">
    <property type="component" value="Chromosome"/>
</dbReference>
<dbReference type="GO" id="GO:0022627">
    <property type="term" value="C:cytosolic small ribosomal subunit"/>
    <property type="evidence" value="ECO:0007669"/>
    <property type="project" value="TreeGrafter"/>
</dbReference>
<dbReference type="GO" id="GO:0003735">
    <property type="term" value="F:structural constituent of ribosome"/>
    <property type="evidence" value="ECO:0007669"/>
    <property type="project" value="InterPro"/>
</dbReference>
<dbReference type="GO" id="GO:0006412">
    <property type="term" value="P:translation"/>
    <property type="evidence" value="ECO:0007669"/>
    <property type="project" value="UniProtKB-UniRule"/>
</dbReference>
<dbReference type="CDD" id="cd01425">
    <property type="entry name" value="RPS2"/>
    <property type="match status" value="1"/>
</dbReference>
<dbReference type="FunFam" id="1.10.287.610:FF:000001">
    <property type="entry name" value="30S ribosomal protein S2"/>
    <property type="match status" value="1"/>
</dbReference>
<dbReference type="Gene3D" id="3.40.50.10490">
    <property type="entry name" value="Glucose-6-phosphate isomerase like protein, domain 1"/>
    <property type="match status" value="1"/>
</dbReference>
<dbReference type="Gene3D" id="1.10.287.610">
    <property type="entry name" value="Helix hairpin bin"/>
    <property type="match status" value="1"/>
</dbReference>
<dbReference type="HAMAP" id="MF_00291_B">
    <property type="entry name" value="Ribosomal_uS2_B"/>
    <property type="match status" value="1"/>
</dbReference>
<dbReference type="InterPro" id="IPR001865">
    <property type="entry name" value="Ribosomal_uS2"/>
</dbReference>
<dbReference type="InterPro" id="IPR005706">
    <property type="entry name" value="Ribosomal_uS2_bac/mit/plastid"/>
</dbReference>
<dbReference type="InterPro" id="IPR018130">
    <property type="entry name" value="Ribosomal_uS2_CS"/>
</dbReference>
<dbReference type="InterPro" id="IPR023591">
    <property type="entry name" value="Ribosomal_uS2_flav_dom_sf"/>
</dbReference>
<dbReference type="NCBIfam" id="TIGR01011">
    <property type="entry name" value="rpsB_bact"/>
    <property type="match status" value="1"/>
</dbReference>
<dbReference type="PANTHER" id="PTHR12534">
    <property type="entry name" value="30S RIBOSOMAL PROTEIN S2 PROKARYOTIC AND ORGANELLAR"/>
    <property type="match status" value="1"/>
</dbReference>
<dbReference type="PANTHER" id="PTHR12534:SF0">
    <property type="entry name" value="SMALL RIBOSOMAL SUBUNIT PROTEIN US2M"/>
    <property type="match status" value="1"/>
</dbReference>
<dbReference type="Pfam" id="PF00318">
    <property type="entry name" value="Ribosomal_S2"/>
    <property type="match status" value="1"/>
</dbReference>
<dbReference type="PRINTS" id="PR00395">
    <property type="entry name" value="RIBOSOMALS2"/>
</dbReference>
<dbReference type="SUPFAM" id="SSF52313">
    <property type="entry name" value="Ribosomal protein S2"/>
    <property type="match status" value="1"/>
</dbReference>
<dbReference type="PROSITE" id="PS00962">
    <property type="entry name" value="RIBOSOMAL_S2_1"/>
    <property type="match status" value="1"/>
</dbReference>
<dbReference type="PROSITE" id="PS00963">
    <property type="entry name" value="RIBOSOMAL_S2_2"/>
    <property type="match status" value="1"/>
</dbReference>
<protein>
    <recommendedName>
        <fullName evidence="1">Small ribosomal subunit protein uS2</fullName>
    </recommendedName>
    <alternativeName>
        <fullName evidence="2">30S ribosomal protein S2</fullName>
    </alternativeName>
</protein>
<keyword id="KW-0687">Ribonucleoprotein</keyword>
<keyword id="KW-0689">Ribosomal protein</keyword>
<accession>B0JTL2</accession>
<feature type="chain" id="PRO_1000078886" description="Small ribosomal subunit protein uS2">
    <location>
        <begin position="1"/>
        <end position="265"/>
    </location>
</feature>
<gene>
    <name evidence="1" type="primary">rpsB</name>
    <name evidence="1" type="synonym">rps2</name>
    <name type="ordered locus">MAE_44930</name>
</gene>
<proteinExistence type="inferred from homology"/>